<feature type="signal peptide" evidence="1">
    <location>
        <begin position="1"/>
        <end position="24"/>
    </location>
</feature>
<feature type="chain" id="PRO_0000023858" description="Cytochrome c6">
    <location>
        <begin position="25"/>
        <end position="117"/>
    </location>
</feature>
<feature type="binding site" description="covalent" evidence="1">
    <location>
        <position position="38"/>
    </location>
    <ligand>
        <name>heme c</name>
        <dbReference type="ChEBI" id="CHEBI:61717"/>
    </ligand>
</feature>
<feature type="binding site" description="covalent" evidence="1">
    <location>
        <position position="41"/>
    </location>
    <ligand>
        <name>heme c</name>
        <dbReference type="ChEBI" id="CHEBI:61717"/>
    </ligand>
</feature>
<feature type="binding site" description="axial binding residue" evidence="1">
    <location>
        <position position="42"/>
    </location>
    <ligand>
        <name>heme c</name>
        <dbReference type="ChEBI" id="CHEBI:61717"/>
    </ligand>
    <ligandPart>
        <name>Fe</name>
        <dbReference type="ChEBI" id="CHEBI:18248"/>
    </ligandPart>
</feature>
<feature type="binding site" description="axial binding residue" evidence="1">
    <location>
        <position position="89"/>
    </location>
    <ligand>
        <name>heme c</name>
        <dbReference type="ChEBI" id="CHEBI:61717"/>
    </ligand>
    <ligandPart>
        <name>Fe</name>
        <dbReference type="ChEBI" id="CHEBI:18248"/>
    </ligandPart>
</feature>
<feature type="helix" evidence="3">
    <location>
        <begin position="27"/>
        <end position="37"/>
    </location>
</feature>
<feature type="helix" evidence="3">
    <location>
        <begin position="39"/>
        <end position="42"/>
    </location>
</feature>
<feature type="helix" evidence="3">
    <location>
        <begin position="43"/>
        <end position="45"/>
    </location>
</feature>
<feature type="strand" evidence="3">
    <location>
        <begin position="48"/>
        <end position="50"/>
    </location>
</feature>
<feature type="helix" evidence="3">
    <location>
        <begin position="57"/>
        <end position="63"/>
    </location>
</feature>
<feature type="turn" evidence="3">
    <location>
        <begin position="65"/>
        <end position="70"/>
    </location>
</feature>
<feature type="helix" evidence="3">
    <location>
        <begin position="74"/>
        <end position="84"/>
    </location>
</feature>
<feature type="helix" evidence="3">
    <location>
        <begin position="98"/>
        <end position="113"/>
    </location>
</feature>
<protein>
    <recommendedName>
        <fullName>Cytochrome c6</fullName>
    </recommendedName>
    <alternativeName>
        <fullName>Cytochrome c-553</fullName>
    </alternativeName>
    <alternativeName>
        <fullName>Cytochrome c553</fullName>
    </alternativeName>
    <alternativeName>
        <fullName>Soluble cytochrome f</fullName>
    </alternativeName>
</protein>
<proteinExistence type="evidence at protein level"/>
<sequence length="117" mass="11916">MKKLLAIALTVLATVFAFGTPAFAADAAAGAQVFAANCAACHAGGNNAVMPTKTLKADALKTYLAGYKDGSKSLEEAVAYQVTNGQGAMPAFGGRLSDADIANVAAYIADQAENNKW</sequence>
<dbReference type="EMBL" id="AF020306">
    <property type="protein sequence ID" value="AAB81077.1"/>
    <property type="molecule type" value="Genomic_DNA"/>
</dbReference>
<dbReference type="EMBL" id="CP000951">
    <property type="protein sequence ID" value="ACA98181.1"/>
    <property type="molecule type" value="Genomic_DNA"/>
</dbReference>
<dbReference type="RefSeq" id="WP_012305805.1">
    <property type="nucleotide sequence ID" value="NZ_JAHHPU010000004.1"/>
</dbReference>
<dbReference type="PDB" id="3DR0">
    <property type="method" value="X-ray"/>
    <property type="resolution" value="1.23 A"/>
    <property type="chains" value="A/B/C=25-117"/>
</dbReference>
<dbReference type="PDB" id="4EIC">
    <property type="method" value="X-ray"/>
    <property type="resolution" value="0.84 A"/>
    <property type="chains" value="A=25-117"/>
</dbReference>
<dbReference type="PDB" id="4EID">
    <property type="method" value="X-ray"/>
    <property type="resolution" value="1.13 A"/>
    <property type="chains" value="A=25-117"/>
</dbReference>
<dbReference type="PDBsum" id="3DR0"/>
<dbReference type="PDBsum" id="4EIC"/>
<dbReference type="PDBsum" id="4EID"/>
<dbReference type="SMR" id="O30881"/>
<dbReference type="STRING" id="32049.SYNPCC7002_A0167"/>
<dbReference type="KEGG" id="syp:SYNPCC7002_A0167"/>
<dbReference type="eggNOG" id="COG2010">
    <property type="taxonomic scope" value="Bacteria"/>
</dbReference>
<dbReference type="HOGENOM" id="CLU_101159_1_0_3"/>
<dbReference type="EvolutionaryTrace" id="O30881"/>
<dbReference type="Proteomes" id="UP000001688">
    <property type="component" value="Chromosome"/>
</dbReference>
<dbReference type="GO" id="GO:0031979">
    <property type="term" value="C:plasma membrane-derived thylakoid lumen"/>
    <property type="evidence" value="ECO:0007669"/>
    <property type="project" value="UniProtKB-SubCell"/>
</dbReference>
<dbReference type="GO" id="GO:0009055">
    <property type="term" value="F:electron transfer activity"/>
    <property type="evidence" value="ECO:0007669"/>
    <property type="project" value="UniProtKB-UniRule"/>
</dbReference>
<dbReference type="GO" id="GO:0020037">
    <property type="term" value="F:heme binding"/>
    <property type="evidence" value="ECO:0007669"/>
    <property type="project" value="InterPro"/>
</dbReference>
<dbReference type="GO" id="GO:0005506">
    <property type="term" value="F:iron ion binding"/>
    <property type="evidence" value="ECO:0007669"/>
    <property type="project" value="InterPro"/>
</dbReference>
<dbReference type="GO" id="GO:0015979">
    <property type="term" value="P:photosynthesis"/>
    <property type="evidence" value="ECO:0007669"/>
    <property type="project" value="UniProtKB-UniRule"/>
</dbReference>
<dbReference type="Gene3D" id="1.10.760.10">
    <property type="entry name" value="Cytochrome c-like domain"/>
    <property type="match status" value="1"/>
</dbReference>
<dbReference type="HAMAP" id="MF_00594">
    <property type="entry name" value="Cytc_PetJ"/>
    <property type="match status" value="1"/>
</dbReference>
<dbReference type="InterPro" id="IPR009056">
    <property type="entry name" value="Cyt_c-like_dom"/>
</dbReference>
<dbReference type="InterPro" id="IPR036909">
    <property type="entry name" value="Cyt_c-like_dom_sf"/>
</dbReference>
<dbReference type="InterPro" id="IPR023655">
    <property type="entry name" value="Cyt_C6"/>
</dbReference>
<dbReference type="InterPro" id="IPR008168">
    <property type="entry name" value="Cyt_C_IC"/>
</dbReference>
<dbReference type="PANTHER" id="PTHR34688">
    <property type="entry name" value="CYTOCHROME C6, CHLOROPLASTIC"/>
    <property type="match status" value="1"/>
</dbReference>
<dbReference type="PANTHER" id="PTHR34688:SF2">
    <property type="entry name" value="CYTOCHROME C6, CHLOROPLASTIC"/>
    <property type="match status" value="1"/>
</dbReference>
<dbReference type="Pfam" id="PF13442">
    <property type="entry name" value="Cytochrome_CBB3"/>
    <property type="match status" value="1"/>
</dbReference>
<dbReference type="PRINTS" id="PR00605">
    <property type="entry name" value="CYTCHROMECIC"/>
</dbReference>
<dbReference type="SUPFAM" id="SSF46626">
    <property type="entry name" value="Cytochrome c"/>
    <property type="match status" value="1"/>
</dbReference>
<dbReference type="PROSITE" id="PS51007">
    <property type="entry name" value="CYTC"/>
    <property type="match status" value="1"/>
</dbReference>
<organism>
    <name type="scientific">Picosynechococcus sp. (strain ATCC 27264 / PCC 7002 / PR-6)</name>
    <name type="common">Agmenellum quadruplicatum</name>
    <dbReference type="NCBI Taxonomy" id="32049"/>
    <lineage>
        <taxon>Bacteria</taxon>
        <taxon>Bacillati</taxon>
        <taxon>Cyanobacteriota</taxon>
        <taxon>Cyanophyceae</taxon>
        <taxon>Oscillatoriophycideae</taxon>
        <taxon>Chroococcales</taxon>
        <taxon>Geminocystaceae</taxon>
        <taxon>Picosynechococcus</taxon>
    </lineage>
</organism>
<name>CYC6_PICP2</name>
<accession>O30881</accession>
<accession>B1XM34</accession>
<reference key="1">
    <citation type="submission" date="1997-08" db="EMBL/GenBank/DDBJ databases">
        <title>Synechococcus sp. strain PCC 7002 cytochrome c6.</title>
        <authorList>
            <person name="Nomura C.T."/>
            <person name="Bryant D.A."/>
        </authorList>
    </citation>
    <scope>NUCLEOTIDE SEQUENCE [GENOMIC DNA]</scope>
</reference>
<reference key="2">
    <citation type="submission" date="2008-02" db="EMBL/GenBank/DDBJ databases">
        <title>Complete sequence of Synechococcus sp. PCC 7002.</title>
        <authorList>
            <person name="Li T."/>
            <person name="Zhao J."/>
            <person name="Zhao C."/>
            <person name="Liu Z."/>
            <person name="Zhao F."/>
            <person name="Marquardt J."/>
            <person name="Nomura C.T."/>
            <person name="Persson S."/>
            <person name="Detter J.C."/>
            <person name="Richardson P.M."/>
            <person name="Lanz C."/>
            <person name="Schuster S.C."/>
            <person name="Wang J."/>
            <person name="Li S."/>
            <person name="Huang X."/>
            <person name="Cai T."/>
            <person name="Yu Z."/>
            <person name="Luo J."/>
            <person name="Zhao J."/>
            <person name="Bryant D.A."/>
        </authorList>
    </citation>
    <scope>NUCLEOTIDE SEQUENCE [LARGE SCALE GENOMIC DNA]</scope>
    <source>
        <strain>ATCC 27264 / PCC 7002 / PR-6</strain>
    </source>
</reference>
<comment type="function">
    <text evidence="1">Functions as an electron carrier between membrane-bound cytochrome b6-f and photosystem I in oxygenic photosynthesis.</text>
</comment>
<comment type="subunit">
    <text evidence="1">Monomer.</text>
</comment>
<comment type="subcellular location">
    <subcellularLocation>
        <location evidence="2">Cellular thylakoid lumen</location>
    </subcellularLocation>
</comment>
<comment type="PTM">
    <text evidence="1">Binds 1 heme c group covalently per subunit.</text>
</comment>
<comment type="similarity">
    <text evidence="2">Belongs to the cytochrome c family. PetJ subfamily.</text>
</comment>
<gene>
    <name type="primary">petJ</name>
    <name type="ordered locus">SYNPCC7002_A0167</name>
</gene>
<keyword id="KW-0002">3D-structure</keyword>
<keyword id="KW-0249">Electron transport</keyword>
<keyword id="KW-0349">Heme</keyword>
<keyword id="KW-0408">Iron</keyword>
<keyword id="KW-0479">Metal-binding</keyword>
<keyword id="KW-0602">Photosynthesis</keyword>
<keyword id="KW-1185">Reference proteome</keyword>
<keyword id="KW-0732">Signal</keyword>
<keyword id="KW-0793">Thylakoid</keyword>
<keyword id="KW-0813">Transport</keyword>
<evidence type="ECO:0000250" key="1"/>
<evidence type="ECO:0000305" key="2"/>
<evidence type="ECO:0007829" key="3">
    <source>
        <dbReference type="PDB" id="4EIC"/>
    </source>
</evidence>